<geneLocation type="chloroplast"/>
<sequence length="99" mass="10765">MATYKVTLISEEHDINTTIDCNDDVFVLDAAEEAGIDLPYSCRAGACSTCAGKVTEGTIDQSEQTFLDDDQMGAGFVLTCIAYPKSDCTILVHQEDELY</sequence>
<reference key="1">
    <citation type="journal article" date="1998" name="Eur. J. Phycol.">
        <title>The petF region of the chloroplast genome from the diatom Thalassiosira weissflogii: sequence, organization and phylogeny.</title>
        <authorList>
            <person name="Gueneau P."/>
            <person name="Morel F."/>
            <person name="Laroche J."/>
            <person name="Erdner D."/>
        </authorList>
    </citation>
    <scope>NUCLEOTIDE SEQUENCE [GENOMIC DNA]</scope>
</reference>
<name>FER_THAWE</name>
<proteinExistence type="inferred from homology"/>
<accession>O98450</accession>
<gene>
    <name type="primary">petF</name>
</gene>
<comment type="function">
    <text>Ferredoxins are iron-sulfur proteins that transfer electrons in a wide variety of metabolic reactions.</text>
</comment>
<comment type="cofactor">
    <cofactor>
        <name>[2Fe-2S] cluster</name>
        <dbReference type="ChEBI" id="CHEBI:190135"/>
    </cofactor>
    <text>Binds 1 [2Fe-2S] cluster.</text>
</comment>
<comment type="subunit">
    <text evidence="1">Forms a complex with heterodimeric ferredoxin-thioredoxin reductase (FTR) and thioredoxin.</text>
</comment>
<comment type="subcellular location">
    <subcellularLocation>
        <location>Plastid</location>
        <location>Chloroplast</location>
    </subcellularLocation>
</comment>
<comment type="similarity">
    <text evidence="3">Belongs to the 2Fe2S plant-type ferredoxin family.</text>
</comment>
<dbReference type="EMBL" id="AF049491">
    <property type="protein sequence ID" value="AAD12752.1"/>
    <property type="molecule type" value="Genomic_DNA"/>
</dbReference>
<dbReference type="RefSeq" id="YP_009093409.1">
    <property type="nucleotide sequence ID" value="NC_025314.1"/>
</dbReference>
<dbReference type="SMR" id="O98450"/>
<dbReference type="GeneID" id="20834169"/>
<dbReference type="GO" id="GO:0009507">
    <property type="term" value="C:chloroplast"/>
    <property type="evidence" value="ECO:0007669"/>
    <property type="project" value="UniProtKB-SubCell"/>
</dbReference>
<dbReference type="GO" id="GO:0051537">
    <property type="term" value="F:2 iron, 2 sulfur cluster binding"/>
    <property type="evidence" value="ECO:0007669"/>
    <property type="project" value="UniProtKB-KW"/>
</dbReference>
<dbReference type="GO" id="GO:0009055">
    <property type="term" value="F:electron transfer activity"/>
    <property type="evidence" value="ECO:0007669"/>
    <property type="project" value="InterPro"/>
</dbReference>
<dbReference type="GO" id="GO:0046872">
    <property type="term" value="F:metal ion binding"/>
    <property type="evidence" value="ECO:0007669"/>
    <property type="project" value="UniProtKB-KW"/>
</dbReference>
<dbReference type="GO" id="GO:0022900">
    <property type="term" value="P:electron transport chain"/>
    <property type="evidence" value="ECO:0007669"/>
    <property type="project" value="InterPro"/>
</dbReference>
<dbReference type="CDD" id="cd00207">
    <property type="entry name" value="fer2"/>
    <property type="match status" value="1"/>
</dbReference>
<dbReference type="FunFam" id="3.10.20.30:FF:000014">
    <property type="entry name" value="Ferredoxin"/>
    <property type="match status" value="1"/>
</dbReference>
<dbReference type="Gene3D" id="3.10.20.30">
    <property type="match status" value="1"/>
</dbReference>
<dbReference type="InterPro" id="IPR036010">
    <property type="entry name" value="2Fe-2S_ferredoxin-like_sf"/>
</dbReference>
<dbReference type="InterPro" id="IPR001041">
    <property type="entry name" value="2Fe-2S_ferredoxin-type"/>
</dbReference>
<dbReference type="InterPro" id="IPR006058">
    <property type="entry name" value="2Fe2S_fd_BS"/>
</dbReference>
<dbReference type="InterPro" id="IPR012675">
    <property type="entry name" value="Beta-grasp_dom_sf"/>
</dbReference>
<dbReference type="InterPro" id="IPR010241">
    <property type="entry name" value="Fd_pln"/>
</dbReference>
<dbReference type="NCBIfam" id="TIGR02008">
    <property type="entry name" value="fdx_plant"/>
    <property type="match status" value="1"/>
</dbReference>
<dbReference type="PANTHER" id="PTHR43112">
    <property type="entry name" value="FERREDOXIN"/>
    <property type="match status" value="1"/>
</dbReference>
<dbReference type="PANTHER" id="PTHR43112:SF3">
    <property type="entry name" value="FERREDOXIN-2, CHLOROPLASTIC"/>
    <property type="match status" value="1"/>
</dbReference>
<dbReference type="Pfam" id="PF00111">
    <property type="entry name" value="Fer2"/>
    <property type="match status" value="1"/>
</dbReference>
<dbReference type="SUPFAM" id="SSF54292">
    <property type="entry name" value="2Fe-2S ferredoxin-like"/>
    <property type="match status" value="1"/>
</dbReference>
<dbReference type="PROSITE" id="PS00197">
    <property type="entry name" value="2FE2S_FER_1"/>
    <property type="match status" value="1"/>
</dbReference>
<dbReference type="PROSITE" id="PS51085">
    <property type="entry name" value="2FE2S_FER_2"/>
    <property type="match status" value="1"/>
</dbReference>
<organism>
    <name type="scientific">Thalassiosira weissflogii</name>
    <name type="common">Marine diatom</name>
    <dbReference type="NCBI Taxonomy" id="1577725"/>
    <lineage>
        <taxon>Eukaryota</taxon>
        <taxon>Sar</taxon>
        <taxon>Stramenopiles</taxon>
        <taxon>Ochrophyta</taxon>
        <taxon>Bacillariophyta</taxon>
        <taxon>Coscinodiscophyceae</taxon>
        <taxon>Thalassiosirophycidae</taxon>
        <taxon>Thalassiosirales</taxon>
        <taxon>Thalassiosiraceae</taxon>
        <taxon>Conticribra</taxon>
    </lineage>
</organism>
<keyword id="KW-0001">2Fe-2S</keyword>
<keyword id="KW-0150">Chloroplast</keyword>
<keyword id="KW-0249">Electron transport</keyword>
<keyword id="KW-0408">Iron</keyword>
<keyword id="KW-0411">Iron-sulfur</keyword>
<keyword id="KW-0479">Metal-binding</keyword>
<keyword id="KW-0934">Plastid</keyword>
<keyword id="KW-0813">Transport</keyword>
<evidence type="ECO:0000250" key="1"/>
<evidence type="ECO:0000255" key="2">
    <source>
        <dbReference type="PROSITE-ProRule" id="PRU00465"/>
    </source>
</evidence>
<evidence type="ECO:0000305" key="3"/>
<protein>
    <recommendedName>
        <fullName>Ferredoxin</fullName>
    </recommendedName>
</protein>
<feature type="initiator methionine" description="Removed" evidence="1">
    <location>
        <position position="1"/>
    </location>
</feature>
<feature type="chain" id="PRO_0000189383" description="Ferredoxin">
    <location>
        <begin position="2"/>
        <end position="99"/>
    </location>
</feature>
<feature type="domain" description="2Fe-2S ferredoxin-type" evidence="2">
    <location>
        <begin position="4"/>
        <end position="96"/>
    </location>
</feature>
<feature type="binding site" evidence="2">
    <location>
        <position position="42"/>
    </location>
    <ligand>
        <name>[2Fe-2S] cluster</name>
        <dbReference type="ChEBI" id="CHEBI:190135"/>
    </ligand>
</feature>
<feature type="binding site" evidence="2">
    <location>
        <position position="47"/>
    </location>
    <ligand>
        <name>[2Fe-2S] cluster</name>
        <dbReference type="ChEBI" id="CHEBI:190135"/>
    </ligand>
</feature>
<feature type="binding site" evidence="2">
    <location>
        <position position="50"/>
    </location>
    <ligand>
        <name>[2Fe-2S] cluster</name>
        <dbReference type="ChEBI" id="CHEBI:190135"/>
    </ligand>
</feature>
<feature type="binding site" evidence="2">
    <location>
        <position position="80"/>
    </location>
    <ligand>
        <name>[2Fe-2S] cluster</name>
        <dbReference type="ChEBI" id="CHEBI:190135"/>
    </ligand>
</feature>